<keyword id="KW-0007">Acetylation</keyword>
<keyword id="KW-1185">Reference proteome</keyword>
<dbReference type="EMBL" id="FM180568">
    <property type="protein sequence ID" value="CAS08705.1"/>
    <property type="molecule type" value="Genomic_DNA"/>
</dbReference>
<dbReference type="RefSeq" id="WP_000877137.1">
    <property type="nucleotide sequence ID" value="NC_011601.1"/>
</dbReference>
<dbReference type="SMR" id="B7UP81"/>
<dbReference type="KEGG" id="ecg:E2348C_1157"/>
<dbReference type="HOGENOM" id="CLU_057831_2_0_6"/>
<dbReference type="Proteomes" id="UP000008205">
    <property type="component" value="Chromosome"/>
</dbReference>
<dbReference type="FunFam" id="1.10.10.10:FF:000196">
    <property type="entry name" value="UPF0502 protein YceH"/>
    <property type="match status" value="1"/>
</dbReference>
<dbReference type="Gene3D" id="1.10.10.10">
    <property type="entry name" value="Winged helix-like DNA-binding domain superfamily/Winged helix DNA-binding domain"/>
    <property type="match status" value="2"/>
</dbReference>
<dbReference type="HAMAP" id="MF_01584">
    <property type="entry name" value="UPF0502"/>
    <property type="match status" value="1"/>
</dbReference>
<dbReference type="InterPro" id="IPR007432">
    <property type="entry name" value="DUF480"/>
</dbReference>
<dbReference type="InterPro" id="IPR036388">
    <property type="entry name" value="WH-like_DNA-bd_sf"/>
</dbReference>
<dbReference type="InterPro" id="IPR036390">
    <property type="entry name" value="WH_DNA-bd_sf"/>
</dbReference>
<dbReference type="NCBIfam" id="NF008413">
    <property type="entry name" value="PRK11239.1"/>
    <property type="match status" value="1"/>
</dbReference>
<dbReference type="PANTHER" id="PTHR38768">
    <property type="entry name" value="UPF0502 PROTEIN YCEH"/>
    <property type="match status" value="1"/>
</dbReference>
<dbReference type="PANTHER" id="PTHR38768:SF1">
    <property type="entry name" value="UPF0502 PROTEIN YCEH"/>
    <property type="match status" value="1"/>
</dbReference>
<dbReference type="Pfam" id="PF04337">
    <property type="entry name" value="DUF480"/>
    <property type="match status" value="1"/>
</dbReference>
<dbReference type="SUPFAM" id="SSF46785">
    <property type="entry name" value="Winged helix' DNA-binding domain"/>
    <property type="match status" value="2"/>
</dbReference>
<name>YCEH_ECO27</name>
<accession>B7UP81</accession>
<gene>
    <name evidence="1" type="primary">yceH</name>
    <name type="ordered locus">E2348C_1157</name>
</gene>
<protein>
    <recommendedName>
        <fullName evidence="1">UPF0502 protein YceH</fullName>
    </recommendedName>
</protein>
<organism>
    <name type="scientific">Escherichia coli O127:H6 (strain E2348/69 / EPEC)</name>
    <dbReference type="NCBI Taxonomy" id="574521"/>
    <lineage>
        <taxon>Bacteria</taxon>
        <taxon>Pseudomonadati</taxon>
        <taxon>Pseudomonadota</taxon>
        <taxon>Gammaproteobacteria</taxon>
        <taxon>Enterobacterales</taxon>
        <taxon>Enterobacteriaceae</taxon>
        <taxon>Escherichia</taxon>
    </lineage>
</organism>
<sequence>MKYQLTAMEARVIGCLLEKQVTTPEQYPLSVNGVVTACNQKTNREPVMNLSESEVQEQLDNLVKRHYLRTVSGFGNRVTKYEQRFCNSEFGDLKLSAAEVALITTLLLRGAQTPGELRSRAARMYEFSDMAEVESTLEQLASREDGPFVVRLAREPGKRESRYMHLFSGEVENPPAVTDMSNAADGDLQARVEALEIEVAELKQRLDSLLAHLGD</sequence>
<feature type="chain" id="PRO_1000185662" description="UPF0502 protein YceH">
    <location>
        <begin position="1"/>
        <end position="215"/>
    </location>
</feature>
<feature type="modified residue" description="N6-acetyllysine" evidence="1">
    <location>
        <position position="80"/>
    </location>
</feature>
<comment type="similarity">
    <text evidence="1">Belongs to the UPF0502 family.</text>
</comment>
<reference key="1">
    <citation type="journal article" date="2009" name="J. Bacteriol.">
        <title>Complete genome sequence and comparative genome analysis of enteropathogenic Escherichia coli O127:H6 strain E2348/69.</title>
        <authorList>
            <person name="Iguchi A."/>
            <person name="Thomson N.R."/>
            <person name="Ogura Y."/>
            <person name="Saunders D."/>
            <person name="Ooka T."/>
            <person name="Henderson I.R."/>
            <person name="Harris D."/>
            <person name="Asadulghani M."/>
            <person name="Kurokawa K."/>
            <person name="Dean P."/>
            <person name="Kenny B."/>
            <person name="Quail M.A."/>
            <person name="Thurston S."/>
            <person name="Dougan G."/>
            <person name="Hayashi T."/>
            <person name="Parkhill J."/>
            <person name="Frankel G."/>
        </authorList>
    </citation>
    <scope>NUCLEOTIDE SEQUENCE [LARGE SCALE GENOMIC DNA]</scope>
    <source>
        <strain>E2348/69 / EPEC</strain>
    </source>
</reference>
<evidence type="ECO:0000255" key="1">
    <source>
        <dbReference type="HAMAP-Rule" id="MF_01584"/>
    </source>
</evidence>
<proteinExistence type="inferred from homology"/>